<sequence>MPHPDGDLDRRIELLTAQIIAARKAYYQENTSLMSDVEYDALEHELKDAEHAKGFSDRNSPSLTVGIAAQLNLFEPVKHIEPMLSLDNVFSLDQLHSWYEKTKKICPEGDQCTFVCELKIDGVGVSLRYANGYLISAATRGDGAIGEDITQNMLYVPSIPPRIALPGIFEIRGEAFIKRDEFDRINQLSLERSKQFANPRNFVSGCIRTKTPNMRYLESISFYAHGFTQVYGYTSGGMNLHSDITASGGVKTEIEHGMFSAYSRLSECKIPVNSYNRLCTNFSEIESYIENIRLNRQCVPYAIDGIVVKIDSLQKQALLGSTTKAPRWAVAYKFPSESTVTRLLDIEVSVGRTGRVTPYAVLQPIQLDGSEVSRATLHNQKVIGDKDLLIGDYVRIRKAGDIVPEVLCALPEKRDGSEVLFKMPSLCPSCGAELMPSKLGDIDLRCPNMQSCLVQLAGRLEYIGSRGVLDIAYLAEENAYALSHLRKFGKSAEVQLFKITIDDLVALEFMYKGNMRSPFRKKGDSFPGFEEPTKSAQDMVDSIERAKRSPLWKFLLALNIRHIGPASAKALADHFGSIESIINAKIDELLKVRSLGETIAISVHDWFRDPWRVELVNTWRSDGALFGD</sequence>
<feature type="chain" id="PRO_0000313499" description="DNA ligase">
    <location>
        <begin position="1"/>
        <end position="628"/>
    </location>
</feature>
<feature type="active site" description="N6-AMP-lysine intermediate" evidence="1">
    <location>
        <position position="119"/>
    </location>
</feature>
<feature type="binding site" evidence="1">
    <location>
        <begin position="36"/>
        <end position="40"/>
    </location>
    <ligand>
        <name>NAD(+)</name>
        <dbReference type="ChEBI" id="CHEBI:57540"/>
    </ligand>
</feature>
<feature type="binding site" evidence="1">
    <location>
        <begin position="85"/>
        <end position="86"/>
    </location>
    <ligand>
        <name>NAD(+)</name>
        <dbReference type="ChEBI" id="CHEBI:57540"/>
    </ligand>
</feature>
<feature type="binding site" evidence="1">
    <location>
        <position position="117"/>
    </location>
    <ligand>
        <name>NAD(+)</name>
        <dbReference type="ChEBI" id="CHEBI:57540"/>
    </ligand>
</feature>
<feature type="binding site" evidence="1">
    <location>
        <position position="140"/>
    </location>
    <ligand>
        <name>NAD(+)</name>
        <dbReference type="ChEBI" id="CHEBI:57540"/>
    </ligand>
</feature>
<feature type="binding site" evidence="1">
    <location>
        <position position="174"/>
    </location>
    <ligand>
        <name>NAD(+)</name>
        <dbReference type="ChEBI" id="CHEBI:57540"/>
    </ligand>
</feature>
<feature type="binding site" evidence="1">
    <location>
        <position position="309"/>
    </location>
    <ligand>
        <name>NAD(+)</name>
        <dbReference type="ChEBI" id="CHEBI:57540"/>
    </ligand>
</feature>
<feature type="binding site" evidence="1">
    <location>
        <position position="333"/>
    </location>
    <ligand>
        <name>NAD(+)</name>
        <dbReference type="ChEBI" id="CHEBI:57540"/>
    </ligand>
</feature>
<feature type="binding site" evidence="1">
    <location>
        <position position="427"/>
    </location>
    <ligand>
        <name>Zn(2+)</name>
        <dbReference type="ChEBI" id="CHEBI:29105"/>
    </ligand>
</feature>
<feature type="binding site" evidence="1">
    <location>
        <position position="430"/>
    </location>
    <ligand>
        <name>Zn(2+)</name>
        <dbReference type="ChEBI" id="CHEBI:29105"/>
    </ligand>
</feature>
<feature type="binding site" evidence="1">
    <location>
        <position position="446"/>
    </location>
    <ligand>
        <name>Zn(2+)</name>
        <dbReference type="ChEBI" id="CHEBI:29105"/>
    </ligand>
</feature>
<feature type="binding site" evidence="1">
    <location>
        <position position="452"/>
    </location>
    <ligand>
        <name>Zn(2+)</name>
        <dbReference type="ChEBI" id="CHEBI:29105"/>
    </ligand>
</feature>
<protein>
    <recommendedName>
        <fullName evidence="1">DNA ligase</fullName>
        <ecNumber evidence="1">6.5.1.2</ecNumber>
    </recommendedName>
    <alternativeName>
        <fullName evidence="1">Polydeoxyribonucleotide synthase [NAD(+)]</fullName>
    </alternativeName>
</protein>
<accession>Q83HX4</accession>
<proteinExistence type="inferred from homology"/>
<dbReference type="EC" id="6.5.1.2" evidence="1"/>
<dbReference type="EMBL" id="BX251411">
    <property type="protein sequence ID" value="CAD67026.1"/>
    <property type="molecule type" value="Genomic_DNA"/>
</dbReference>
<dbReference type="RefSeq" id="WP_011096306.1">
    <property type="nucleotide sequence ID" value="NC_004551.1"/>
</dbReference>
<dbReference type="SMR" id="Q83HX4"/>
<dbReference type="GeneID" id="67388127"/>
<dbReference type="KEGG" id="tws:TW354"/>
<dbReference type="HOGENOM" id="CLU_007764_2_1_11"/>
<dbReference type="GO" id="GO:0005829">
    <property type="term" value="C:cytosol"/>
    <property type="evidence" value="ECO:0007669"/>
    <property type="project" value="TreeGrafter"/>
</dbReference>
<dbReference type="GO" id="GO:0003911">
    <property type="term" value="F:DNA ligase (NAD+) activity"/>
    <property type="evidence" value="ECO:0007669"/>
    <property type="project" value="UniProtKB-UniRule"/>
</dbReference>
<dbReference type="GO" id="GO:0046872">
    <property type="term" value="F:metal ion binding"/>
    <property type="evidence" value="ECO:0007669"/>
    <property type="project" value="UniProtKB-KW"/>
</dbReference>
<dbReference type="GO" id="GO:0006281">
    <property type="term" value="P:DNA repair"/>
    <property type="evidence" value="ECO:0007669"/>
    <property type="project" value="UniProtKB-KW"/>
</dbReference>
<dbReference type="GO" id="GO:0006260">
    <property type="term" value="P:DNA replication"/>
    <property type="evidence" value="ECO:0007669"/>
    <property type="project" value="UniProtKB-KW"/>
</dbReference>
<dbReference type="CDD" id="cd00114">
    <property type="entry name" value="LIGANc"/>
    <property type="match status" value="1"/>
</dbReference>
<dbReference type="FunFam" id="2.40.50.140:FF:000012">
    <property type="entry name" value="DNA ligase"/>
    <property type="match status" value="1"/>
</dbReference>
<dbReference type="Gene3D" id="6.20.10.30">
    <property type="match status" value="1"/>
</dbReference>
<dbReference type="Gene3D" id="1.10.150.20">
    <property type="entry name" value="5' to 3' exonuclease, C-terminal subdomain"/>
    <property type="match status" value="2"/>
</dbReference>
<dbReference type="Gene3D" id="3.30.470.30">
    <property type="entry name" value="DNA ligase/mRNA capping enzyme"/>
    <property type="match status" value="1"/>
</dbReference>
<dbReference type="Gene3D" id="1.10.287.610">
    <property type="entry name" value="Helix hairpin bin"/>
    <property type="match status" value="1"/>
</dbReference>
<dbReference type="Gene3D" id="2.40.50.140">
    <property type="entry name" value="Nucleic acid-binding proteins"/>
    <property type="match status" value="1"/>
</dbReference>
<dbReference type="HAMAP" id="MF_01588">
    <property type="entry name" value="DNA_ligase_A"/>
    <property type="match status" value="1"/>
</dbReference>
<dbReference type="InterPro" id="IPR041663">
    <property type="entry name" value="DisA/LigA_HHH"/>
</dbReference>
<dbReference type="InterPro" id="IPR001679">
    <property type="entry name" value="DNA_ligase"/>
</dbReference>
<dbReference type="InterPro" id="IPR018239">
    <property type="entry name" value="DNA_ligase_AS"/>
</dbReference>
<dbReference type="InterPro" id="IPR033136">
    <property type="entry name" value="DNA_ligase_CS"/>
</dbReference>
<dbReference type="InterPro" id="IPR013839">
    <property type="entry name" value="DNAligase_adenylation"/>
</dbReference>
<dbReference type="InterPro" id="IPR013840">
    <property type="entry name" value="DNAligase_N"/>
</dbReference>
<dbReference type="InterPro" id="IPR012340">
    <property type="entry name" value="NA-bd_OB-fold"/>
</dbReference>
<dbReference type="InterPro" id="IPR004150">
    <property type="entry name" value="NAD_DNA_ligase_OB"/>
</dbReference>
<dbReference type="InterPro" id="IPR010994">
    <property type="entry name" value="RuvA_2-like"/>
</dbReference>
<dbReference type="InterPro" id="IPR004149">
    <property type="entry name" value="Znf_DNAligase_C4"/>
</dbReference>
<dbReference type="NCBIfam" id="TIGR00575">
    <property type="entry name" value="dnlj"/>
    <property type="match status" value="1"/>
</dbReference>
<dbReference type="NCBIfam" id="NF005932">
    <property type="entry name" value="PRK07956.1"/>
    <property type="match status" value="1"/>
</dbReference>
<dbReference type="PANTHER" id="PTHR23389">
    <property type="entry name" value="CHROMOSOME TRANSMISSION FIDELITY FACTOR 18"/>
    <property type="match status" value="1"/>
</dbReference>
<dbReference type="PANTHER" id="PTHR23389:SF9">
    <property type="entry name" value="DNA LIGASE"/>
    <property type="match status" value="1"/>
</dbReference>
<dbReference type="Pfam" id="PF01653">
    <property type="entry name" value="DNA_ligase_aden"/>
    <property type="match status" value="1"/>
</dbReference>
<dbReference type="Pfam" id="PF03120">
    <property type="entry name" value="DNA_ligase_OB"/>
    <property type="match status" value="1"/>
</dbReference>
<dbReference type="Pfam" id="PF03119">
    <property type="entry name" value="DNA_ligase_ZBD"/>
    <property type="match status" value="1"/>
</dbReference>
<dbReference type="Pfam" id="PF12826">
    <property type="entry name" value="HHH_2"/>
    <property type="match status" value="1"/>
</dbReference>
<dbReference type="PIRSF" id="PIRSF001604">
    <property type="entry name" value="LigA"/>
    <property type="match status" value="1"/>
</dbReference>
<dbReference type="SMART" id="SM00532">
    <property type="entry name" value="LIGANc"/>
    <property type="match status" value="1"/>
</dbReference>
<dbReference type="SUPFAM" id="SSF56091">
    <property type="entry name" value="DNA ligase/mRNA capping enzyme, catalytic domain"/>
    <property type="match status" value="1"/>
</dbReference>
<dbReference type="SUPFAM" id="SSF50249">
    <property type="entry name" value="Nucleic acid-binding proteins"/>
    <property type="match status" value="1"/>
</dbReference>
<dbReference type="SUPFAM" id="SSF47781">
    <property type="entry name" value="RuvA domain 2-like"/>
    <property type="match status" value="1"/>
</dbReference>
<dbReference type="PROSITE" id="PS01055">
    <property type="entry name" value="DNA_LIGASE_N1"/>
    <property type="match status" value="1"/>
</dbReference>
<dbReference type="PROSITE" id="PS01056">
    <property type="entry name" value="DNA_LIGASE_N2"/>
    <property type="match status" value="1"/>
</dbReference>
<name>DNLJ_TROW8</name>
<keyword id="KW-0227">DNA damage</keyword>
<keyword id="KW-0234">DNA repair</keyword>
<keyword id="KW-0235">DNA replication</keyword>
<keyword id="KW-0436">Ligase</keyword>
<keyword id="KW-0460">Magnesium</keyword>
<keyword id="KW-0464">Manganese</keyword>
<keyword id="KW-0479">Metal-binding</keyword>
<keyword id="KW-0520">NAD</keyword>
<keyword id="KW-0862">Zinc</keyword>
<evidence type="ECO:0000255" key="1">
    <source>
        <dbReference type="HAMAP-Rule" id="MF_01588"/>
    </source>
</evidence>
<gene>
    <name evidence="1" type="primary">ligA</name>
    <name type="ordered locus">TW354</name>
</gene>
<comment type="function">
    <text evidence="1">DNA ligase that catalyzes the formation of phosphodiester linkages between 5'-phosphoryl and 3'-hydroxyl groups in double-stranded DNA using NAD as a coenzyme and as the energy source for the reaction. It is essential for DNA replication and repair of damaged DNA.</text>
</comment>
<comment type="catalytic activity">
    <reaction evidence="1">
        <text>NAD(+) + (deoxyribonucleotide)n-3'-hydroxyl + 5'-phospho-(deoxyribonucleotide)m = (deoxyribonucleotide)n+m + AMP + beta-nicotinamide D-nucleotide.</text>
        <dbReference type="EC" id="6.5.1.2"/>
    </reaction>
</comment>
<comment type="cofactor">
    <cofactor evidence="1">
        <name>Mg(2+)</name>
        <dbReference type="ChEBI" id="CHEBI:18420"/>
    </cofactor>
    <cofactor evidence="1">
        <name>Mn(2+)</name>
        <dbReference type="ChEBI" id="CHEBI:29035"/>
    </cofactor>
</comment>
<comment type="similarity">
    <text evidence="1">Belongs to the NAD-dependent DNA ligase family. LigA subfamily.</text>
</comment>
<organism>
    <name type="scientific">Tropheryma whipplei (strain TW08/27)</name>
    <name type="common">Whipple's bacillus</name>
    <dbReference type="NCBI Taxonomy" id="218496"/>
    <lineage>
        <taxon>Bacteria</taxon>
        <taxon>Bacillati</taxon>
        <taxon>Actinomycetota</taxon>
        <taxon>Actinomycetes</taxon>
        <taxon>Micrococcales</taxon>
        <taxon>Tropherymataceae</taxon>
        <taxon>Tropheryma</taxon>
    </lineage>
</organism>
<reference key="1">
    <citation type="journal article" date="2003" name="Lancet">
        <title>Sequencing and analysis of the genome of the Whipple's disease bacterium Tropheryma whipplei.</title>
        <authorList>
            <person name="Bentley S.D."/>
            <person name="Maiwald M."/>
            <person name="Murphy L.D."/>
            <person name="Pallen M.J."/>
            <person name="Yeats C.A."/>
            <person name="Dover L.G."/>
            <person name="Norbertczak H.T."/>
            <person name="Besra G.S."/>
            <person name="Quail M.A."/>
            <person name="Harris D.E."/>
            <person name="von Herbay A."/>
            <person name="Goble A."/>
            <person name="Rutter S."/>
            <person name="Squares R."/>
            <person name="Squares S."/>
            <person name="Barrell B.G."/>
            <person name="Parkhill J."/>
            <person name="Relman D.A."/>
        </authorList>
    </citation>
    <scope>NUCLEOTIDE SEQUENCE [LARGE SCALE GENOMIC DNA]</scope>
    <source>
        <strain>TW08/27</strain>
    </source>
</reference>